<dbReference type="EC" id="3.1.1.1" evidence="15"/>
<dbReference type="EMBL" id="KF899892">
    <property type="protein sequence ID" value="AIG62138.1"/>
    <property type="molecule type" value="Genomic_DNA"/>
</dbReference>
<dbReference type="EMBL" id="JQFZ01000262">
    <property type="protein sequence ID" value="KGO52633.1"/>
    <property type="molecule type" value="Genomic_DNA"/>
</dbReference>
<dbReference type="RefSeq" id="XP_016595363.1">
    <property type="nucleotide sequence ID" value="XM_016745550.1"/>
</dbReference>
<dbReference type="SMR" id="A0A075TXZ3"/>
<dbReference type="STRING" id="27334.A0A075TXZ3"/>
<dbReference type="ESTHER" id="penen-a0a075txz3">
    <property type="family name" value="Fungal_carboxylesterase_lipase"/>
</dbReference>
<dbReference type="GlyCosmos" id="A0A075TXZ3">
    <property type="glycosylation" value="8 sites, No reported glycans"/>
</dbReference>
<dbReference type="GeneID" id="27680970"/>
<dbReference type="VEuPathDB" id="FungiDB:PEXP_094380"/>
<dbReference type="HOGENOM" id="CLU_006586_10_5_1"/>
<dbReference type="OrthoDB" id="408631at2759"/>
<dbReference type="PhylomeDB" id="A0A075TXZ3"/>
<dbReference type="UniPathway" id="UPA00918"/>
<dbReference type="Proteomes" id="UP000030143">
    <property type="component" value="Unassembled WGS sequence"/>
</dbReference>
<dbReference type="GO" id="GO:0005829">
    <property type="term" value="C:cytosol"/>
    <property type="evidence" value="ECO:0007669"/>
    <property type="project" value="UniProtKB-SubCell"/>
</dbReference>
<dbReference type="GO" id="GO:0106435">
    <property type="term" value="F:carboxylesterase activity"/>
    <property type="evidence" value="ECO:0007669"/>
    <property type="project" value="UniProtKB-EC"/>
</dbReference>
<dbReference type="GO" id="GO:0017000">
    <property type="term" value="P:antibiotic biosynthetic process"/>
    <property type="evidence" value="ECO:0007669"/>
    <property type="project" value="UniProtKB-ARBA"/>
</dbReference>
<dbReference type="GO" id="GO:0072330">
    <property type="term" value="P:monocarboxylic acid biosynthetic process"/>
    <property type="evidence" value="ECO:0007669"/>
    <property type="project" value="UniProtKB-ARBA"/>
</dbReference>
<dbReference type="Gene3D" id="3.40.50.1820">
    <property type="entry name" value="alpha/beta hydrolase"/>
    <property type="match status" value="1"/>
</dbReference>
<dbReference type="InterPro" id="IPR029058">
    <property type="entry name" value="AB_hydrolase_fold"/>
</dbReference>
<dbReference type="InterPro" id="IPR002018">
    <property type="entry name" value="CarbesteraseB"/>
</dbReference>
<dbReference type="InterPro" id="IPR019826">
    <property type="entry name" value="Carboxylesterase_B_AS"/>
</dbReference>
<dbReference type="InterPro" id="IPR019819">
    <property type="entry name" value="Carboxylesterase_B_CS"/>
</dbReference>
<dbReference type="InterPro" id="IPR050309">
    <property type="entry name" value="Type-B_Carboxylest/Lipase"/>
</dbReference>
<dbReference type="PANTHER" id="PTHR11559">
    <property type="entry name" value="CARBOXYLESTERASE"/>
    <property type="match status" value="1"/>
</dbReference>
<dbReference type="Pfam" id="PF00135">
    <property type="entry name" value="COesterase"/>
    <property type="match status" value="1"/>
</dbReference>
<dbReference type="SUPFAM" id="SSF53474">
    <property type="entry name" value="alpha/beta-Hydrolases"/>
    <property type="match status" value="1"/>
</dbReference>
<dbReference type="PROSITE" id="PS00122">
    <property type="entry name" value="CARBOXYLESTERASE_B_1"/>
    <property type="match status" value="1"/>
</dbReference>
<dbReference type="PROSITE" id="PS00941">
    <property type="entry name" value="CARBOXYLESTERASE_B_2"/>
    <property type="match status" value="1"/>
</dbReference>
<organism>
    <name type="scientific">Penicillium expansum</name>
    <name type="common">Blue mold rot fungus</name>
    <dbReference type="NCBI Taxonomy" id="27334"/>
    <lineage>
        <taxon>Eukaryota</taxon>
        <taxon>Fungi</taxon>
        <taxon>Dikarya</taxon>
        <taxon>Ascomycota</taxon>
        <taxon>Pezizomycotina</taxon>
        <taxon>Eurotiomycetes</taxon>
        <taxon>Eurotiomycetidae</taxon>
        <taxon>Eurotiales</taxon>
        <taxon>Aspergillaceae</taxon>
        <taxon>Penicillium</taxon>
    </lineage>
</organism>
<sequence>MQIINWASLLLVTWETVVAAELPIVDLGYQRHQAIGFNSTGRYYQFSNVRYAEPPLGPLRFSLPVSPRNRSHEVVNGKGLGNICPQSQACWFNVQGDFVSAVTAGSTFNFTAAYDQVYQQDECTKPRPVADQNPLESEDCLFLDVYVPEKVISKRRDGNGKSNPGAPVLVYFQDGAYVSGSKSDQNPSGLIATSREDGSTGIIYVGVNYRLGVFGWLSGQKFQSEGGLPNAGLYDERLALEWVQRHITKFGGDPSRVTVMGVSAGGGSITMQLTAYGRAIRPPFAQIIAQSPAWEPGTKTPAIEDDLLDSFLTLLNVSSLEEARRLPSQALLDANYELVASRPYGSGVFGPAIDGSFVPDSPKRLLLERKVDPSVRILTSYTANEGFMLAPANVTDDATFNRYVDVLLRGANASVRAHTSRVLYPPIFNGSWPYHSQHERANLLWSEVSTTCNTRYLHQAVATPGYAIEYAVKPAMHLSDTSSVFYNGQGSSSSLNATIAQLMQRQIVQFVKTGNPNVKGDPHVPLYHGQAHVLSLGDNGVRVEPALTNTDRCTYWQQVEF</sequence>
<protein>
    <recommendedName>
        <fullName evidence="13">Carboxylesterase patB</fullName>
        <ecNumber evidence="15">3.1.1.1</ecNumber>
    </recommendedName>
    <alternativeName>
        <fullName evidence="13">Patulin biosynthesis cluster protein B</fullName>
    </alternativeName>
</protein>
<name>PATB_PENEN</name>
<accession>A0A075TXZ3</accession>
<comment type="function">
    <text evidence="8 11 12 16">Carboxylesterase; part of the gene cluster that mediates the biosynthesis of patulin, an acetate-derived tetraketide mycotoxin produced by several fungal species that shows antimicrobial properties against several bacteria (PubMed:25625822, PubMed:30100914, PubMed:30680886). The function of patB in patulin synthesis has still to be characterized (PubMed:30680886). The pathway begins with the synthesis of 6-methylsalicylic acid by the polyketide synthase (PKS) patK via condensation of acetate and malonate units. The 6-methylsalicylic acid decarboxylase patG then catalyzes the decarboxylation of 6-methylsalicylic acid to yield m-cresol (also known as 3-methylphenol). These first reactions occur in the cytosol. The intermediate m-cresol is then transported into the endoplasmic reticulum where the cytochrome P450 monooxygenase patH converts it to m-hydroxybenzyl alcohol, which is further converted to gentisyl alcohol by the cytochrome P450 monooxygenase patI. The oxidoreductases patJ and patO further convert gentisyl alcohol to isoepoxydon in the vacuole. PatN catalyzes then the transformation of isoepoxydon into phyllostine. The cluster protein patF is responsible for the conversion from phyllostine to neopatulin whereas the alcohol dehydrogenase patD converts neopatulin to E-ascladiol. The steps between isoepoxydon and E-ascladiol occur in the cytosol, and E-ascladiol is probably secreted to the extracellular space by one of the cluster-specific transporters patC or patM. Finally, the secreted patulin synthase patE catalyzes the conversion of E-ascladiol to patulin (Probable) (PubMed:30680886).</text>
</comment>
<comment type="catalytic activity">
    <reaction evidence="4">
        <text>a carboxylic ester + H2O = an alcohol + a carboxylate + H(+)</text>
        <dbReference type="Rhea" id="RHEA:21164"/>
        <dbReference type="ChEBI" id="CHEBI:15377"/>
        <dbReference type="ChEBI" id="CHEBI:15378"/>
        <dbReference type="ChEBI" id="CHEBI:29067"/>
        <dbReference type="ChEBI" id="CHEBI:30879"/>
        <dbReference type="ChEBI" id="CHEBI:33308"/>
        <dbReference type="EC" id="3.1.1.1"/>
    </reaction>
</comment>
<comment type="pathway">
    <text evidence="12">Mycotoxin biosynthesis; patulin biosynthesis.</text>
</comment>
<comment type="subcellular location">
    <subcellularLocation>
        <location evidence="12">Cytoplasm</location>
        <location evidence="12">Cytosol</location>
    </subcellularLocation>
</comment>
<comment type="induction">
    <text evidence="7 8 10 11 12">Expression is correlated with the production of patulin (PubMed:25120234). Expression is positively regulated by the secondary metabolism regulator laeA (PubMed:27528575, PubMed:30100914). Expression is strongly decreased with increased sucrose concentrations. This decrease is lost in the presence of malic acid (PubMed:30100914). Expression is increased with pH changes from 2.5 to 3.5 in the presence of a limiting concentration of sucrose, 50 mM (PubMed:30100914). Natural phenols present in apple fruits such as chlorogenic acid or the flavonoid epicatechin modulate patulin biosynthesis. They increase expression in the absence of sucrose, have little impact in the presence of 15 mM sucrose, and decrease expression in 175 mM sucrose (PubMed:30100914). Expression is positively regulated by the patulin cluster-specific transcription factor patL (PubMed:25625822). Finally, expression is also positively regulated by the velvet family proteins transcription regulators veA, velB, velC, but not vosA (PubMed:30680886).</text>
</comment>
<comment type="disruption phenotype">
    <text evidence="12">Strongly reduces the production of patulin.</text>
</comment>
<comment type="biotechnology">
    <text evidence="5 6 9">Patulin was originally used as an antibiotic and specifically trialed to be used against the common cold, but it is no longer used for that purpose since it has been shown to induce immunological, neurological and gastrointestinal effects (PubMed:15082620). Genotoxic effects of patulin with dose-dependent increase in DNA strand breaks in brain, liver and kidneys have been detected in mice (PubMed:22222931). However, more recently, it has been proposed that patulin might also have anti-tumor properties (PubMed:26619846).</text>
</comment>
<comment type="similarity">
    <text evidence="14">Belongs to the type-B carboxylesterase/lipase family.</text>
</comment>
<gene>
    <name evidence="13" type="primary">patB</name>
    <name type="ORF">PEX2_082800</name>
</gene>
<feature type="signal peptide" evidence="2">
    <location>
        <begin position="1"/>
        <end position="19"/>
    </location>
</feature>
<feature type="chain" id="PRO_5007947098" description="Carboxylesterase patB" evidence="2">
    <location>
        <begin position="20"/>
        <end position="561"/>
    </location>
</feature>
<feature type="active site" description="Acyl-ester intermediate" evidence="4">
    <location>
        <position position="263"/>
    </location>
</feature>
<feature type="active site" description="Charge relay system" evidence="1">
    <location>
        <position position="385"/>
    </location>
</feature>
<feature type="binding site" evidence="1">
    <location>
        <position position="263"/>
    </location>
    <ligand>
        <name>substrate</name>
    </ligand>
</feature>
<feature type="glycosylation site" description="N-linked (GlcNAc...) asparagine" evidence="3">
    <location>
        <position position="38"/>
    </location>
</feature>
<feature type="glycosylation site" description="N-linked (GlcNAc...) asparagine" evidence="3">
    <location>
        <position position="69"/>
    </location>
</feature>
<feature type="glycosylation site" description="N-linked (GlcNAc...) asparagine" evidence="3">
    <location>
        <position position="109"/>
    </location>
</feature>
<feature type="glycosylation site" description="N-linked (GlcNAc...) asparagine" evidence="3">
    <location>
        <position position="316"/>
    </location>
</feature>
<feature type="glycosylation site" description="N-linked (GlcNAc...) asparagine" evidence="3">
    <location>
        <position position="393"/>
    </location>
</feature>
<feature type="glycosylation site" description="N-linked (GlcNAc...) asparagine" evidence="3">
    <location>
        <position position="412"/>
    </location>
</feature>
<feature type="glycosylation site" description="N-linked (GlcNAc...) asparagine" evidence="3">
    <location>
        <position position="429"/>
    </location>
</feature>
<feature type="glycosylation site" description="N-linked (GlcNAc...) asparagine" evidence="3">
    <location>
        <position position="496"/>
    </location>
</feature>
<evidence type="ECO:0000250" key="1">
    <source>
        <dbReference type="UniProtKB" id="P22303"/>
    </source>
</evidence>
<evidence type="ECO:0000255" key="2"/>
<evidence type="ECO:0000255" key="3">
    <source>
        <dbReference type="PROSITE-ProRule" id="PRU00498"/>
    </source>
</evidence>
<evidence type="ECO:0000255" key="4">
    <source>
        <dbReference type="PROSITE-ProRule" id="PRU10039"/>
    </source>
</evidence>
<evidence type="ECO:0000269" key="5">
    <source>
    </source>
</evidence>
<evidence type="ECO:0000269" key="6">
    <source>
    </source>
</evidence>
<evidence type="ECO:0000269" key="7">
    <source>
    </source>
</evidence>
<evidence type="ECO:0000269" key="8">
    <source>
    </source>
</evidence>
<evidence type="ECO:0000269" key="9">
    <source>
    </source>
</evidence>
<evidence type="ECO:0000269" key="10">
    <source>
    </source>
</evidence>
<evidence type="ECO:0000269" key="11">
    <source>
    </source>
</evidence>
<evidence type="ECO:0000269" key="12">
    <source>
    </source>
</evidence>
<evidence type="ECO:0000303" key="13">
    <source>
    </source>
</evidence>
<evidence type="ECO:0000305" key="14"/>
<evidence type="ECO:0000305" key="15">
    <source>
    </source>
</evidence>
<evidence type="ECO:0000305" key="16">
    <source>
    </source>
</evidence>
<reference key="1">
    <citation type="journal article" date="2014" name="Int. J. Food Microbiol.">
        <title>Sequencing, physical organization and kinetic expression of the patulin biosynthetic gene cluster from Penicillium expansum.</title>
        <authorList>
            <person name="Tannous J."/>
            <person name="El Khoury R."/>
            <person name="Snini S.P."/>
            <person name="Lippi Y."/>
            <person name="El Khoury A."/>
            <person name="Atoui A."/>
            <person name="Lteif R."/>
            <person name="Oswald I.P."/>
            <person name="Puel O."/>
        </authorList>
    </citation>
    <scope>NUCLEOTIDE SEQUENCE [GENOMIC DNA]</scope>
    <scope>IDENTIFICATION</scope>
    <scope>FUNCTION</scope>
    <scope>INDUCTION</scope>
    <scope>PATHWAY</scope>
    <source>
        <strain>NRRL 35695</strain>
    </source>
</reference>
<reference key="2">
    <citation type="journal article" date="2015" name="Mol. Plant Microbe Interact.">
        <title>Genome, transcriptome, and functional analyses of Penicillium expansum provide new insights into secondary metabolism and pathogenicity.</title>
        <authorList>
            <person name="Ballester A.R."/>
            <person name="Marcet-Houben M."/>
            <person name="Levin E."/>
            <person name="Sela N."/>
            <person name="Selma-Lazaro C."/>
            <person name="Carmona L."/>
            <person name="Wisniewski M."/>
            <person name="Droby S."/>
            <person name="Gonzalez-Candelas L."/>
            <person name="Gabaldon T."/>
        </authorList>
    </citation>
    <scope>NUCLEOTIDE SEQUENCE [LARGE SCALE GENOMIC DNA]</scope>
    <source>
        <strain>MD-8</strain>
    </source>
</reference>
<reference key="3">
    <citation type="journal article" date="2004" name="Int. J. Epidemiol.">
        <title>Clinical trial of patulin in the common cold. 1944.</title>
        <authorList>
            <consortium name="Patulin Clinical Trials Committee, Medical Research Council"/>
        </authorList>
    </citation>
    <scope>BIOTECHNOLOGY</scope>
</reference>
<reference key="4">
    <citation type="journal article" date="2012" name="Food Chem. Toxicol.">
        <title>DNA damage in organs of mice treated acutely with patulin, a known mycotoxin.</title>
        <authorList>
            <person name="de Melo F.T."/>
            <person name="de Oliveira I.M."/>
            <person name="Greggio S."/>
            <person name="Dacosta J.C."/>
            <person name="Guecheva T.N."/>
            <person name="Saffi J."/>
            <person name="Henriques J.A."/>
            <person name="Rosa R.M."/>
        </authorList>
    </citation>
    <scope>BIOTECHNOLOGY</scope>
</reference>
<reference key="5">
    <citation type="journal article" date="2016" name="Tumor Biol.">
        <title>The potential effect of patulin on mice bearing melanoma cells: an anti-tumour or carcinogenic effect?</title>
        <authorList>
            <person name="Boussabbeh M."/>
            <person name="Ben Salem I."/>
            <person name="Rjiba-Touati K."/>
            <person name="Bouyahya C."/>
            <person name="Neffati F."/>
            <person name="Najjar M.F."/>
            <person name="Bacha H."/>
            <person name="Abid-Essefi S."/>
        </authorList>
    </citation>
    <scope>BIOTECHNOLOGY</scope>
</reference>
<reference key="6">
    <citation type="journal article" date="2017" name="Mol. Plant Pathol.">
        <title>LaeA regulation of secondary metabolism modulates virulence in Penicillium expansum and is mediated by sucrose.</title>
        <authorList>
            <person name="Kumar D."/>
            <person name="Barad S."/>
            <person name="Chen Y."/>
            <person name="Luo X."/>
            <person name="Tannous J."/>
            <person name="Dubey A."/>
            <person name="Glam Matana N."/>
            <person name="Tian S."/>
            <person name="Li B."/>
            <person name="Keller N."/>
            <person name="Prusky D."/>
        </authorList>
    </citation>
    <scope>INDUCTION</scope>
</reference>
<reference key="7">
    <citation type="journal article" date="2018" name="Front. Plant Sci.">
        <title>Apple intrinsic factors modulating the global regulator, LaeA, the patulin gene cluster and patulin accumulation during fruit colonization by Penicillium expansum.</title>
        <authorList>
            <person name="Kumar D."/>
            <person name="Tannous J."/>
            <person name="Sionov E."/>
            <person name="Keller N."/>
            <person name="Prusky D."/>
        </authorList>
    </citation>
    <scope>FUNCTION</scope>
    <scope>INDUCTION</scope>
</reference>
<reference key="8">
    <citation type="journal article" date="2015" name="Mol. Plant Microbe Interact.">
        <title>Genomic characterization reveals insights into patulin biosynthesis and pathogenicity in Penicillium species.</title>
        <authorList>
            <person name="Li B."/>
            <person name="Zong Y."/>
            <person name="Du Z."/>
            <person name="Chen Y."/>
            <person name="Zhang Z."/>
            <person name="Qin G."/>
            <person name="Zhao W."/>
            <person name="Tian S."/>
        </authorList>
    </citation>
    <scope>FUNCTION</scope>
    <scope>INDUCTION</scope>
</reference>
<reference key="9">
    <citation type="journal article" date="2019" name="Environ. Microbiol.">
        <title>Dissection of patulin biosynthesis, spatial control and regulation mechanism in Penicillium expansum.</title>
        <authorList>
            <person name="Li B."/>
            <person name="Chen Y."/>
            <person name="Zong Y."/>
            <person name="Shang Y."/>
            <person name="Zhang Z."/>
            <person name="Xu X."/>
            <person name="Wang X."/>
            <person name="Long M."/>
            <person name="Tian S."/>
        </authorList>
    </citation>
    <scope>FUNCTION</scope>
    <scope>DISRUPTION PHENOTYPE</scope>
    <scope>SUBCELLULAR LOCATION</scope>
    <scope>INDUCTION</scope>
    <scope>PATHWAY</scope>
</reference>
<proteinExistence type="evidence at protein level"/>
<keyword id="KW-0963">Cytoplasm</keyword>
<keyword id="KW-0325">Glycoprotein</keyword>
<keyword id="KW-0378">Hydrolase</keyword>
<keyword id="KW-1185">Reference proteome</keyword>
<keyword id="KW-0732">Signal</keyword>